<accession>B5BAT2</accession>
<name>RECO_SALPK</name>
<organism>
    <name type="scientific">Salmonella paratyphi A (strain AKU_12601)</name>
    <dbReference type="NCBI Taxonomy" id="554290"/>
    <lineage>
        <taxon>Bacteria</taxon>
        <taxon>Pseudomonadati</taxon>
        <taxon>Pseudomonadota</taxon>
        <taxon>Gammaproteobacteria</taxon>
        <taxon>Enterobacterales</taxon>
        <taxon>Enterobacteriaceae</taxon>
        <taxon>Salmonella</taxon>
    </lineage>
</organism>
<gene>
    <name evidence="1" type="primary">recO</name>
    <name type="ordered locus">SSPA0271</name>
</gene>
<dbReference type="EMBL" id="FM200053">
    <property type="protein sequence ID" value="CAR58386.1"/>
    <property type="molecule type" value="Genomic_DNA"/>
</dbReference>
<dbReference type="RefSeq" id="WP_000399380.1">
    <property type="nucleotide sequence ID" value="NC_011147.1"/>
</dbReference>
<dbReference type="SMR" id="B5BAT2"/>
<dbReference type="KEGG" id="sek:SSPA0271"/>
<dbReference type="HOGENOM" id="CLU_066645_1_0_6"/>
<dbReference type="Proteomes" id="UP000001869">
    <property type="component" value="Chromosome"/>
</dbReference>
<dbReference type="GO" id="GO:0043590">
    <property type="term" value="C:bacterial nucleoid"/>
    <property type="evidence" value="ECO:0007669"/>
    <property type="project" value="TreeGrafter"/>
</dbReference>
<dbReference type="GO" id="GO:0006310">
    <property type="term" value="P:DNA recombination"/>
    <property type="evidence" value="ECO:0007669"/>
    <property type="project" value="UniProtKB-UniRule"/>
</dbReference>
<dbReference type="GO" id="GO:0006302">
    <property type="term" value="P:double-strand break repair"/>
    <property type="evidence" value="ECO:0007669"/>
    <property type="project" value="TreeGrafter"/>
</dbReference>
<dbReference type="FunFam" id="1.20.1440.120:FF:000001">
    <property type="entry name" value="DNA repair protein RecO"/>
    <property type="match status" value="1"/>
</dbReference>
<dbReference type="FunFam" id="2.40.50.140:FF:000074">
    <property type="entry name" value="DNA repair protein RecO"/>
    <property type="match status" value="1"/>
</dbReference>
<dbReference type="Gene3D" id="2.40.50.140">
    <property type="entry name" value="Nucleic acid-binding proteins"/>
    <property type="match status" value="1"/>
</dbReference>
<dbReference type="Gene3D" id="1.20.1440.120">
    <property type="entry name" value="Recombination protein O, C-terminal domain"/>
    <property type="match status" value="1"/>
</dbReference>
<dbReference type="HAMAP" id="MF_00201">
    <property type="entry name" value="RecO"/>
    <property type="match status" value="1"/>
</dbReference>
<dbReference type="InterPro" id="IPR037278">
    <property type="entry name" value="ARFGAP/RecO"/>
</dbReference>
<dbReference type="InterPro" id="IPR022572">
    <property type="entry name" value="DNA_rep/recomb_RecO_N"/>
</dbReference>
<dbReference type="InterPro" id="IPR012340">
    <property type="entry name" value="NA-bd_OB-fold"/>
</dbReference>
<dbReference type="InterPro" id="IPR003717">
    <property type="entry name" value="RecO"/>
</dbReference>
<dbReference type="InterPro" id="IPR042242">
    <property type="entry name" value="RecO_C"/>
</dbReference>
<dbReference type="NCBIfam" id="TIGR00613">
    <property type="entry name" value="reco"/>
    <property type="match status" value="1"/>
</dbReference>
<dbReference type="PANTHER" id="PTHR33991">
    <property type="entry name" value="DNA REPAIR PROTEIN RECO"/>
    <property type="match status" value="1"/>
</dbReference>
<dbReference type="PANTHER" id="PTHR33991:SF1">
    <property type="entry name" value="DNA REPAIR PROTEIN RECO"/>
    <property type="match status" value="1"/>
</dbReference>
<dbReference type="Pfam" id="PF02565">
    <property type="entry name" value="RecO_C"/>
    <property type="match status" value="1"/>
</dbReference>
<dbReference type="Pfam" id="PF11967">
    <property type="entry name" value="RecO_N"/>
    <property type="match status" value="1"/>
</dbReference>
<dbReference type="SUPFAM" id="SSF57863">
    <property type="entry name" value="ArfGap/RecO-like zinc finger"/>
    <property type="match status" value="1"/>
</dbReference>
<dbReference type="SUPFAM" id="SSF50249">
    <property type="entry name" value="Nucleic acid-binding proteins"/>
    <property type="match status" value="1"/>
</dbReference>
<comment type="function">
    <text evidence="1">Involved in DNA repair and RecF pathway recombination.</text>
</comment>
<comment type="subunit">
    <text evidence="1">Monomer.</text>
</comment>
<comment type="similarity">
    <text evidence="1">Belongs to the RecO family.</text>
</comment>
<feature type="chain" id="PRO_1000099410" description="DNA repair protein RecO">
    <location>
        <begin position="1"/>
        <end position="242"/>
    </location>
</feature>
<evidence type="ECO:0000255" key="1">
    <source>
        <dbReference type="HAMAP-Rule" id="MF_00201"/>
    </source>
</evidence>
<keyword id="KW-0227">DNA damage</keyword>
<keyword id="KW-0233">DNA recombination</keyword>
<keyword id="KW-0234">DNA repair</keyword>
<sequence>MEGWQRAFVLHSRPWSETSLMLDVFTEESGRVRLVAKGARSKRSNLKGALQPFTPLLLRYSGRGEVKTLRSAEAVSLALPLSGITLYSGLYINELLSRVLEYETRFSELFFDYLNCIQALAGTTGSPEPALRRFELALLGHLGYGVNFTHCAGSGERVDDTMTYRYREEKGFFASVVIDNNTFTGRHLKALEAREFPDVDTLRAAKRFTRMALKPYLGGKPLKSRELFRQFMPKRTVKTKKD</sequence>
<proteinExistence type="inferred from homology"/>
<reference key="1">
    <citation type="journal article" date="2009" name="BMC Genomics">
        <title>Pseudogene accumulation in the evolutionary histories of Salmonella enterica serovars Paratyphi A and Typhi.</title>
        <authorList>
            <person name="Holt K.E."/>
            <person name="Thomson N.R."/>
            <person name="Wain J."/>
            <person name="Langridge G.C."/>
            <person name="Hasan R."/>
            <person name="Bhutta Z.A."/>
            <person name="Quail M.A."/>
            <person name="Norbertczak H."/>
            <person name="Walker D."/>
            <person name="Simmonds M."/>
            <person name="White B."/>
            <person name="Bason N."/>
            <person name="Mungall K."/>
            <person name="Dougan G."/>
            <person name="Parkhill J."/>
        </authorList>
    </citation>
    <scope>NUCLEOTIDE SEQUENCE [LARGE SCALE GENOMIC DNA]</scope>
    <source>
        <strain>AKU_12601</strain>
    </source>
</reference>
<protein>
    <recommendedName>
        <fullName evidence="1">DNA repair protein RecO</fullName>
    </recommendedName>
    <alternativeName>
        <fullName evidence="1">Recombination protein O</fullName>
    </alternativeName>
</protein>